<accession>Q888Q7</accession>
<dbReference type="EC" id="5.3.1.9" evidence="1"/>
<dbReference type="EMBL" id="AE016853">
    <property type="protein sequence ID" value="AAO54493.1"/>
    <property type="molecule type" value="Genomic_DNA"/>
</dbReference>
<dbReference type="RefSeq" id="NP_790798.1">
    <property type="nucleotide sequence ID" value="NC_004578.1"/>
</dbReference>
<dbReference type="RefSeq" id="WP_011103369.1">
    <property type="nucleotide sequence ID" value="NC_004578.1"/>
</dbReference>
<dbReference type="SMR" id="Q888Q7"/>
<dbReference type="STRING" id="223283.PSPTO_0959"/>
<dbReference type="GeneID" id="1182588"/>
<dbReference type="KEGG" id="pst:PSPTO_0959"/>
<dbReference type="PATRIC" id="fig|223283.9.peg.969"/>
<dbReference type="eggNOG" id="COG0166">
    <property type="taxonomic scope" value="Bacteria"/>
</dbReference>
<dbReference type="HOGENOM" id="CLU_017947_3_1_6"/>
<dbReference type="OrthoDB" id="140919at2"/>
<dbReference type="PhylomeDB" id="Q888Q7"/>
<dbReference type="UniPathway" id="UPA00109">
    <property type="reaction ID" value="UER00181"/>
</dbReference>
<dbReference type="UniPathway" id="UPA00138"/>
<dbReference type="Proteomes" id="UP000002515">
    <property type="component" value="Chromosome"/>
</dbReference>
<dbReference type="GO" id="GO:0005829">
    <property type="term" value="C:cytosol"/>
    <property type="evidence" value="ECO:0007669"/>
    <property type="project" value="TreeGrafter"/>
</dbReference>
<dbReference type="GO" id="GO:0097367">
    <property type="term" value="F:carbohydrate derivative binding"/>
    <property type="evidence" value="ECO:0007669"/>
    <property type="project" value="InterPro"/>
</dbReference>
<dbReference type="GO" id="GO:0004347">
    <property type="term" value="F:glucose-6-phosphate isomerase activity"/>
    <property type="evidence" value="ECO:0007669"/>
    <property type="project" value="UniProtKB-UniRule"/>
</dbReference>
<dbReference type="GO" id="GO:0048029">
    <property type="term" value="F:monosaccharide binding"/>
    <property type="evidence" value="ECO:0007669"/>
    <property type="project" value="TreeGrafter"/>
</dbReference>
<dbReference type="GO" id="GO:0006094">
    <property type="term" value="P:gluconeogenesis"/>
    <property type="evidence" value="ECO:0007669"/>
    <property type="project" value="UniProtKB-UniRule"/>
</dbReference>
<dbReference type="GO" id="GO:0051156">
    <property type="term" value="P:glucose 6-phosphate metabolic process"/>
    <property type="evidence" value="ECO:0007669"/>
    <property type="project" value="TreeGrafter"/>
</dbReference>
<dbReference type="GO" id="GO:0006096">
    <property type="term" value="P:glycolytic process"/>
    <property type="evidence" value="ECO:0007669"/>
    <property type="project" value="UniProtKB-UniRule"/>
</dbReference>
<dbReference type="CDD" id="cd05015">
    <property type="entry name" value="SIS_PGI_1"/>
    <property type="match status" value="1"/>
</dbReference>
<dbReference type="CDD" id="cd05016">
    <property type="entry name" value="SIS_PGI_2"/>
    <property type="match status" value="1"/>
</dbReference>
<dbReference type="FunFam" id="3.40.50.10490:FF:000018">
    <property type="entry name" value="Glucose-6-phosphate isomerase"/>
    <property type="match status" value="1"/>
</dbReference>
<dbReference type="Gene3D" id="1.10.1390.10">
    <property type="match status" value="1"/>
</dbReference>
<dbReference type="Gene3D" id="3.40.50.10490">
    <property type="entry name" value="Glucose-6-phosphate isomerase like protein, domain 1"/>
    <property type="match status" value="2"/>
</dbReference>
<dbReference type="HAMAP" id="MF_00473">
    <property type="entry name" value="G6P_isomerase"/>
    <property type="match status" value="1"/>
</dbReference>
<dbReference type="InterPro" id="IPR001672">
    <property type="entry name" value="G6P_Isomerase"/>
</dbReference>
<dbReference type="InterPro" id="IPR023096">
    <property type="entry name" value="G6P_Isomerase_C"/>
</dbReference>
<dbReference type="InterPro" id="IPR018189">
    <property type="entry name" value="Phosphoglucose_isomerase_CS"/>
</dbReference>
<dbReference type="InterPro" id="IPR046348">
    <property type="entry name" value="SIS_dom_sf"/>
</dbReference>
<dbReference type="InterPro" id="IPR035476">
    <property type="entry name" value="SIS_PGI_1"/>
</dbReference>
<dbReference type="InterPro" id="IPR035482">
    <property type="entry name" value="SIS_PGI_2"/>
</dbReference>
<dbReference type="NCBIfam" id="NF001211">
    <property type="entry name" value="PRK00179.1"/>
    <property type="match status" value="1"/>
</dbReference>
<dbReference type="PANTHER" id="PTHR11469">
    <property type="entry name" value="GLUCOSE-6-PHOSPHATE ISOMERASE"/>
    <property type="match status" value="1"/>
</dbReference>
<dbReference type="PANTHER" id="PTHR11469:SF1">
    <property type="entry name" value="GLUCOSE-6-PHOSPHATE ISOMERASE"/>
    <property type="match status" value="1"/>
</dbReference>
<dbReference type="Pfam" id="PF00342">
    <property type="entry name" value="PGI"/>
    <property type="match status" value="1"/>
</dbReference>
<dbReference type="PRINTS" id="PR00662">
    <property type="entry name" value="G6PISOMERASE"/>
</dbReference>
<dbReference type="SUPFAM" id="SSF53697">
    <property type="entry name" value="SIS domain"/>
    <property type="match status" value="1"/>
</dbReference>
<dbReference type="PROSITE" id="PS00765">
    <property type="entry name" value="P_GLUCOSE_ISOMERASE_1"/>
    <property type="match status" value="1"/>
</dbReference>
<dbReference type="PROSITE" id="PS00174">
    <property type="entry name" value="P_GLUCOSE_ISOMERASE_2"/>
    <property type="match status" value="1"/>
</dbReference>
<dbReference type="PROSITE" id="PS51463">
    <property type="entry name" value="P_GLUCOSE_ISOMERASE_3"/>
    <property type="match status" value="1"/>
</dbReference>
<evidence type="ECO:0000255" key="1">
    <source>
        <dbReference type="HAMAP-Rule" id="MF_00473"/>
    </source>
</evidence>
<comment type="function">
    <text evidence="1">Catalyzes the reversible isomerization of glucose-6-phosphate to fructose-6-phosphate.</text>
</comment>
<comment type="catalytic activity">
    <reaction evidence="1">
        <text>alpha-D-glucose 6-phosphate = beta-D-fructose 6-phosphate</text>
        <dbReference type="Rhea" id="RHEA:11816"/>
        <dbReference type="ChEBI" id="CHEBI:57634"/>
        <dbReference type="ChEBI" id="CHEBI:58225"/>
        <dbReference type="EC" id="5.3.1.9"/>
    </reaction>
</comment>
<comment type="pathway">
    <text evidence="1">Carbohydrate biosynthesis; gluconeogenesis.</text>
</comment>
<comment type="pathway">
    <text evidence="1">Carbohydrate degradation; glycolysis; D-glyceraldehyde 3-phosphate and glycerone phosphate from D-glucose: step 2/4.</text>
</comment>
<comment type="subcellular location">
    <subcellularLocation>
        <location evidence="1">Cytoplasm</location>
    </subcellularLocation>
</comment>
<comment type="similarity">
    <text evidence="1">Belongs to the GPI family.</text>
</comment>
<reference key="1">
    <citation type="journal article" date="2003" name="Proc. Natl. Acad. Sci. U.S.A.">
        <title>The complete genome sequence of the Arabidopsis and tomato pathogen Pseudomonas syringae pv. tomato DC3000.</title>
        <authorList>
            <person name="Buell C.R."/>
            <person name="Joardar V."/>
            <person name="Lindeberg M."/>
            <person name="Selengut J."/>
            <person name="Paulsen I.T."/>
            <person name="Gwinn M.L."/>
            <person name="Dodson R.J."/>
            <person name="DeBoy R.T."/>
            <person name="Durkin A.S."/>
            <person name="Kolonay J.F."/>
            <person name="Madupu R."/>
            <person name="Daugherty S.C."/>
            <person name="Brinkac L.M."/>
            <person name="Beanan M.J."/>
            <person name="Haft D.H."/>
            <person name="Nelson W.C."/>
            <person name="Davidsen T.M."/>
            <person name="Zafar N."/>
            <person name="Zhou L."/>
            <person name="Liu J."/>
            <person name="Yuan Q."/>
            <person name="Khouri H.M."/>
            <person name="Fedorova N.B."/>
            <person name="Tran B."/>
            <person name="Russell D."/>
            <person name="Berry K.J."/>
            <person name="Utterback T.R."/>
            <person name="Van Aken S.E."/>
            <person name="Feldblyum T.V."/>
            <person name="D'Ascenzo M."/>
            <person name="Deng W.-L."/>
            <person name="Ramos A.R."/>
            <person name="Alfano J.R."/>
            <person name="Cartinhour S."/>
            <person name="Chatterjee A.K."/>
            <person name="Delaney T.P."/>
            <person name="Lazarowitz S.G."/>
            <person name="Martin G.B."/>
            <person name="Schneider D.J."/>
            <person name="Tang X."/>
            <person name="Bender C.L."/>
            <person name="White O."/>
            <person name="Fraser C.M."/>
            <person name="Collmer A."/>
        </authorList>
    </citation>
    <scope>NUCLEOTIDE SEQUENCE [LARGE SCALE GENOMIC DNA]</scope>
    <source>
        <strain>ATCC BAA-871 / DC3000</strain>
    </source>
</reference>
<name>G6PI_PSESM</name>
<sequence length="554" mass="61565">MAYYRNPSDVTAMPAWQALTKHRQAMQDFSMREAFTDDPKRFSQFTLSSAGLFLDYSKNLITAETRDLLVALAGEVGLKDAIKAQYYGELVNSSEGRPALHTALRRPVGDKLKVNGVDVIPDVHRVLNQMTELVGRIHDGLWRGYTEKPITDVVNIGIGGSFLGPELVSEALVAYAHKGVRCHYLANIDGSEFHELSMKIRAETTLFIVSSKSFNTLETLKNAQAARAWYLAQGGSEVELHRHFIAVSSNNAAAVAFGIREENIFPMWDWVGGRYSLWSAIGLPIALAIGMSNFKELLSGAYTMDQHFQSAPFDQNMPVLLALLGVWYGNFWNAQSHAILPYDHYLRNITKHLQQLDMESNGKSVRQDGTPALTDTGPVIWGGVGANGQHAYHQLLHQGTQMIPADFIVPIVSFNPVADHHQWLYANCLSQSQALMMGKTRAEAEAELRDKGMSEEEVQKLAPHKVIPGNRPSNTLVVERISPRRLGALVAMYEHKVFVQSVIWGTNAFDQWGVELGKEMGKAVYQRLTGGTEEPADDASTQGLINYFRGRHRG</sequence>
<organism>
    <name type="scientific">Pseudomonas syringae pv. tomato (strain ATCC BAA-871 / DC3000)</name>
    <dbReference type="NCBI Taxonomy" id="223283"/>
    <lineage>
        <taxon>Bacteria</taxon>
        <taxon>Pseudomonadati</taxon>
        <taxon>Pseudomonadota</taxon>
        <taxon>Gammaproteobacteria</taxon>
        <taxon>Pseudomonadales</taxon>
        <taxon>Pseudomonadaceae</taxon>
        <taxon>Pseudomonas</taxon>
    </lineage>
</organism>
<feature type="chain" id="PRO_0000180715" description="Glucose-6-phosphate isomerase">
    <location>
        <begin position="1"/>
        <end position="554"/>
    </location>
</feature>
<feature type="active site" description="Proton donor" evidence="1">
    <location>
        <position position="359"/>
    </location>
</feature>
<feature type="active site" evidence="1">
    <location>
        <position position="390"/>
    </location>
</feature>
<feature type="active site" evidence="1">
    <location>
        <position position="518"/>
    </location>
</feature>
<keyword id="KW-0963">Cytoplasm</keyword>
<keyword id="KW-0312">Gluconeogenesis</keyword>
<keyword id="KW-0324">Glycolysis</keyword>
<keyword id="KW-0413">Isomerase</keyword>
<keyword id="KW-1185">Reference proteome</keyword>
<gene>
    <name evidence="1" type="primary">pgi</name>
    <name type="ordered locus">PSPTO_0959</name>
</gene>
<protein>
    <recommendedName>
        <fullName evidence="1">Glucose-6-phosphate isomerase</fullName>
        <shortName evidence="1">GPI</shortName>
        <ecNumber evidence="1">5.3.1.9</ecNumber>
    </recommendedName>
    <alternativeName>
        <fullName evidence="1">Phosphoglucose isomerase</fullName>
        <shortName evidence="1">PGI</shortName>
    </alternativeName>
    <alternativeName>
        <fullName evidence="1">Phosphohexose isomerase</fullName>
        <shortName evidence="1">PHI</shortName>
    </alternativeName>
</protein>
<proteinExistence type="inferred from homology"/>